<reference key="1">
    <citation type="journal article" date="1995" name="Virology">
        <title>Analysis of the complete nucleotide sequence of African swine fever virus.</title>
        <authorList>
            <person name="Yanez R.J."/>
            <person name="Rodriguez J.M."/>
            <person name="Nogal M.L."/>
            <person name="Yuste L."/>
            <person name="Enriquez C."/>
            <person name="Rodriguez J.F."/>
            <person name="Vinuela E."/>
        </authorList>
    </citation>
    <scope>NUCLEOTIDE SEQUENCE [LARGE SCALE GENOMIC DNA]</scope>
</reference>
<reference key="2">
    <citation type="journal article" date="2002" name="J. Gen. Virol.">
        <title>Identification of the principal serological immunodeterminants of African swine fever virus by screening a virus cDNA library with antibody.</title>
        <authorList>
            <person name="Kollnberger S.D."/>
            <person name="Gutierrez-Castaneda B."/>
            <person name="Foster-Cuevas M."/>
            <person name="Corteyn A."/>
            <person name="Parkhouse R.M."/>
        </authorList>
    </citation>
    <scope>CHARACTERIZATION</scope>
</reference>
<reference key="3">
    <citation type="journal article" date="2007" name="J. Gen. Virol.">
        <title>Systematic analysis of longitudinal serological responses of pigs infected experimentally with African swine fever virus.</title>
        <authorList>
            <person name="Reis A.L."/>
            <person name="Parkhouse R.M."/>
            <person name="Penedos A.R."/>
            <person name="Martins C."/>
            <person name="Leitao A."/>
        </authorList>
    </citation>
    <scope>HOST ANTIBODY RESPONSE</scope>
</reference>
<reference key="4">
    <citation type="journal article" date="2017" name="J. Virol.">
        <title>DNA-Binding properties of African swine fever virus pA104R, a histone-Like protein involved in viral replication and transcription.</title>
        <authorList>
            <person name="Frouco G."/>
            <person name="Freitas F.B."/>
            <person name="Coelho J."/>
            <person name="Leitao A."/>
            <person name="Martins C."/>
            <person name="Ferreira F."/>
        </authorList>
    </citation>
    <scope>DNA-BINDING</scope>
    <scope>FUNCTION</scope>
    <scope>MUTAGENESIS OF ARG-69 AND PRO-74</scope>
    <scope>INDUCTION</scope>
    <scope>DISRUPTION PHENOTYPE</scope>
</reference>
<reference key="5">
    <citation type="journal article" date="2018" name="J. Virol.">
        <title>A Proteomic Atlas of the African Swine Fever Virus Particle.</title>
        <authorList>
            <person name="Alejo A."/>
            <person name="Matamoros T."/>
            <person name="Guerra M."/>
            <person name="Andres G."/>
        </authorList>
    </citation>
    <scope>SUBCELLULAR LOCATION</scope>
</reference>
<reference key="6">
    <citation type="journal article" date="2020" name="J. Virol.">
        <title>The African Swine Fever Virus Transcriptome.</title>
        <authorList>
            <person name="Cackett G."/>
            <person name="Matelska D."/>
            <person name="Sykora M."/>
            <person name="Portugal R."/>
            <person name="Malecki M."/>
            <person name="Baehler J."/>
            <person name="Dixon L."/>
            <person name="Werner F."/>
        </authorList>
    </citation>
    <scope>INDUCTION</scope>
</reference>
<reference evidence="8 9" key="7">
    <citation type="journal article" date="2020" name="Proc. Natl. Acad. Sci. U.S.A.">
        <title>The structural basis of African swine fever virus pA104R binding to DNA and its inhibition by stilbene derivatives.</title>
        <authorList>
            <person name="Liu R."/>
            <person name="Sun Y."/>
            <person name="Chai Y."/>
            <person name="Li S."/>
            <person name="Li S."/>
            <person name="Wang L."/>
            <person name="Su J."/>
            <person name="Yu S."/>
            <person name="Yan J."/>
            <person name="Gao F."/>
            <person name="Zhang G."/>
            <person name="Qiu H.J."/>
            <person name="Gao G.F."/>
            <person name="Qi J."/>
            <person name="Wang H."/>
        </authorList>
    </citation>
    <scope>X-RAY CRYSTALLOGRAPHY (2.80 ANGSTROMS)</scope>
    <scope>DNA-BINDING</scope>
    <scope>ACTIVITY REGULATION</scope>
    <scope>SUBUNIT</scope>
</reference>
<organism>
    <name type="scientific">African swine fever virus (strain Badajoz 1971 Vero-adapted)</name>
    <name type="common">Ba71V</name>
    <name type="synonym">ASFV</name>
    <dbReference type="NCBI Taxonomy" id="10498"/>
    <lineage>
        <taxon>Viruses</taxon>
        <taxon>Varidnaviria</taxon>
        <taxon>Bamfordvirae</taxon>
        <taxon>Nucleocytoviricota</taxon>
        <taxon>Pokkesviricetes</taxon>
        <taxon>Asfuvirales</taxon>
        <taxon>Asfarviridae</taxon>
        <taxon>Asfivirus</taxon>
        <taxon>African swine fever virus</taxon>
    </lineage>
</organism>
<dbReference type="EMBL" id="U18466">
    <property type="protein sequence ID" value="AAA65264.1"/>
    <property type="molecule type" value="Genomic_DNA"/>
</dbReference>
<dbReference type="RefSeq" id="NP_042728.1">
    <property type="nucleotide sequence ID" value="NC_001659.2"/>
</dbReference>
<dbReference type="PDB" id="6LMH">
    <property type="method" value="X-ray"/>
    <property type="resolution" value="2.81 A"/>
    <property type="chains" value="A/B=1-104"/>
</dbReference>
<dbReference type="PDB" id="6LMJ">
    <property type="method" value="X-ray"/>
    <property type="resolution" value="2.80 A"/>
    <property type="chains" value="A/B=1-104"/>
</dbReference>
<dbReference type="PDBsum" id="6LMH"/>
<dbReference type="PDBsum" id="6LMJ"/>
<dbReference type="SMR" id="P68742"/>
<dbReference type="GeneID" id="22220416"/>
<dbReference type="KEGG" id="vg:22220416"/>
<dbReference type="Proteomes" id="UP000000624">
    <property type="component" value="Segment"/>
</dbReference>
<dbReference type="GO" id="GO:0044423">
    <property type="term" value="C:virion component"/>
    <property type="evidence" value="ECO:0007669"/>
    <property type="project" value="UniProtKB-KW"/>
</dbReference>
<dbReference type="GO" id="GO:0003677">
    <property type="term" value="F:DNA binding"/>
    <property type="evidence" value="ECO:0007669"/>
    <property type="project" value="UniProtKB-KW"/>
</dbReference>
<dbReference type="GO" id="GO:0030527">
    <property type="term" value="F:structural constituent of chromatin"/>
    <property type="evidence" value="ECO:0007669"/>
    <property type="project" value="InterPro"/>
</dbReference>
<dbReference type="GO" id="GO:0006260">
    <property type="term" value="P:DNA replication"/>
    <property type="evidence" value="ECO:0007669"/>
    <property type="project" value="UniProtKB-KW"/>
</dbReference>
<dbReference type="Gene3D" id="4.10.520.10">
    <property type="entry name" value="IHF-like DNA-binding proteins"/>
    <property type="match status" value="1"/>
</dbReference>
<dbReference type="InterPro" id="IPR000119">
    <property type="entry name" value="Hist_DNA-bd"/>
</dbReference>
<dbReference type="InterPro" id="IPR020816">
    <property type="entry name" value="Histone-like_DNA-bd_CS"/>
</dbReference>
<dbReference type="InterPro" id="IPR010992">
    <property type="entry name" value="IHF-like_DNA-bd_dom_sf"/>
</dbReference>
<dbReference type="PANTHER" id="PTHR33175">
    <property type="entry name" value="DNA-BINDING PROTEIN HU"/>
    <property type="match status" value="1"/>
</dbReference>
<dbReference type="PANTHER" id="PTHR33175:SF13">
    <property type="entry name" value="HISTONE-LIKE PROTEIN"/>
    <property type="match status" value="1"/>
</dbReference>
<dbReference type="Pfam" id="PF00216">
    <property type="entry name" value="Bac_DNA_binding"/>
    <property type="match status" value="1"/>
</dbReference>
<dbReference type="SMART" id="SM00411">
    <property type="entry name" value="BHL"/>
    <property type="match status" value="1"/>
</dbReference>
<dbReference type="SUPFAM" id="SSF47729">
    <property type="entry name" value="IHF-like DNA-binding proteins"/>
    <property type="match status" value="1"/>
</dbReference>
<dbReference type="PROSITE" id="PS00045">
    <property type="entry name" value="HISTONE_LIKE"/>
    <property type="match status" value="1"/>
</dbReference>
<evidence type="ECO:0000269" key="1">
    <source>
    </source>
</evidence>
<evidence type="ECO:0000269" key="2">
    <source>
    </source>
</evidence>
<evidence type="ECO:0000269" key="3">
    <source>
    </source>
</evidence>
<evidence type="ECO:0000269" key="4">
    <source>
    </source>
</evidence>
<evidence type="ECO:0000269" key="5">
    <source>
    </source>
</evidence>
<evidence type="ECO:0000303" key="6">
    <source>
    </source>
</evidence>
<evidence type="ECO:0000305" key="7"/>
<evidence type="ECO:0007744" key="8">
    <source>
        <dbReference type="PDB" id="6LMH"/>
    </source>
</evidence>
<evidence type="ECO:0007744" key="9">
    <source>
        <dbReference type="PDB" id="6LMJ"/>
    </source>
</evidence>
<evidence type="ECO:0007829" key="10">
    <source>
        <dbReference type="PDB" id="6LMJ"/>
    </source>
</evidence>
<gene>
    <name type="ordered locus">BA71V-033</name>
    <name type="ORF">A104R</name>
</gene>
<accession>P68742</accession>
<accession>P43272</accession>
<organismHost>
    <name type="scientific">Ornithodoros</name>
    <name type="common">relapsing fever ticks</name>
    <dbReference type="NCBI Taxonomy" id="6937"/>
</organismHost>
<organismHost>
    <name type="scientific">Sus scrofa</name>
    <name type="common">Pig</name>
    <dbReference type="NCBI Taxonomy" id="9823"/>
</organismHost>
<name>VHLP_ASFB7</name>
<feature type="chain" id="PRO_0000105083" description="Viral histone-like protein">
    <location>
        <begin position="1"/>
        <end position="104"/>
    </location>
</feature>
<feature type="site" description="DNA-binding" evidence="5">
    <location>
        <position position="57"/>
    </location>
</feature>
<feature type="site" description="DNA-binding" evidence="2 5">
    <location>
        <position position="69"/>
    </location>
</feature>
<feature type="site" description="DNA-binding" evidence="5">
    <location>
        <position position="72"/>
    </location>
</feature>
<feature type="site" description="DNA-binding" evidence="5">
    <location>
        <position position="74"/>
    </location>
</feature>
<feature type="site" description="DNA-binding" evidence="5">
    <location>
        <position position="83"/>
    </location>
</feature>
<feature type="site" description="DNA-binding" evidence="5">
    <location>
        <position position="85"/>
    </location>
</feature>
<feature type="site" description="DNA-binding" evidence="5">
    <location>
        <position position="92"/>
    </location>
</feature>
<feature type="site" description="DNA-binding" evidence="5">
    <location>
        <position position="94"/>
    </location>
</feature>
<feature type="site" description="DNA-binding" evidence="5">
    <location>
        <position position="96"/>
    </location>
</feature>
<feature type="site" description="DNA-binding" evidence="5">
    <location>
        <position position="97"/>
    </location>
</feature>
<feature type="mutagenesis site" description="Drastic loss of DNA-binding activity." evidence="2">
    <original>R</original>
    <variation>A</variation>
    <location>
        <position position="69"/>
    </location>
</feature>
<feature type="mutagenesis site" description="No effect on DNA-binding activity." evidence="2">
    <original>R</original>
    <variation>K</variation>
    <location>
        <position position="69"/>
    </location>
</feature>
<feature type="mutagenesis site" description="No effect on DNA-binding activity." evidence="2">
    <original>P</original>
    <variation>A</variation>
    <location>
        <position position="74"/>
    </location>
</feature>
<feature type="helix" evidence="10">
    <location>
        <begin position="11"/>
        <end position="21"/>
    </location>
</feature>
<feature type="helix" evidence="10">
    <location>
        <begin position="26"/>
        <end position="45"/>
    </location>
</feature>
<feature type="strand" evidence="10">
    <location>
        <begin position="50"/>
        <end position="52"/>
    </location>
</feature>
<feature type="turn" evidence="10">
    <location>
        <begin position="53"/>
        <end position="55"/>
    </location>
</feature>
<feature type="strand" evidence="10">
    <location>
        <begin position="56"/>
        <end position="63"/>
    </location>
</feature>
<feature type="strand" evidence="10">
    <location>
        <begin position="70"/>
        <end position="72"/>
    </location>
</feature>
<feature type="turn" evidence="10">
    <location>
        <begin position="74"/>
        <end position="76"/>
    </location>
</feature>
<feature type="strand" evidence="10">
    <location>
        <begin position="79"/>
        <end position="81"/>
    </location>
</feature>
<feature type="strand" evidence="10">
    <location>
        <begin position="88"/>
        <end position="95"/>
    </location>
</feature>
<feature type="helix" evidence="10">
    <location>
        <begin position="97"/>
        <end position="100"/>
    </location>
</feature>
<feature type="helix" evidence="10">
    <location>
        <begin position="101"/>
        <end position="103"/>
    </location>
</feature>
<protein>
    <recommendedName>
        <fullName>Viral histone-like protein</fullName>
    </recommendedName>
    <alternativeName>
        <fullName evidence="6">DNA-binding protein pA104R</fullName>
    </alternativeName>
    <alternativeName>
        <fullName>pA104R</fullName>
    </alternativeName>
</protein>
<sequence length="104" mass="11609">MSTKKKPTITKQELYSLVAADTQLNKALIERIFTSQQKIIQNALKHNQEVIIPPGIKFTVVTVKAKPARQGHNPATGEPIQIKAKPEHKAVKIRALKPVHDMLN</sequence>
<comment type="function">
    <text evidence="2">DNA-binding protein that plays a critical role in nucleoid compaction, genome replication and DNA replication and transcription (PubMed:28381576). Binds to both ssDNA and dsDNA with a binding site covering about 15 nucleotides (PubMed:28381576). Displays DNA-supercoiling activity only when associated with the viral DNA topoisomerase 2 (PubMed:28381576).</text>
</comment>
<comment type="activity regulation">
    <text evidence="5">Stilbene derivatives SD1 and SD4 disrupt the binding between pA104R and DNA and inhibit the viral replication in primary alveolar macrophages.</text>
</comment>
<comment type="subunit">
    <text evidence="5">Homodimer.</text>
</comment>
<comment type="subcellular location">
    <subcellularLocation>
        <location evidence="3">Virion</location>
    </subcellularLocation>
    <text evidence="3">Found in association with viral nucleoid.</text>
</comment>
<comment type="induction">
    <text evidence="2 4">Expressed in the late phase of the viral replicative cycle.</text>
</comment>
<comment type="disruption phenotype">
    <text evidence="2">Knockout of the viral histone-like protein leads to reduced levels of the mRNA coding for the capsid protein and to a reduced number of viral progeny.</text>
</comment>
<comment type="miscellaneous">
    <text evidence="1">Host antibody response against A104R protein is higher in asymptomatic than in chronically infected hosts.</text>
</comment>
<comment type="similarity">
    <text evidence="7">Belongs to the bacterial histone-like protein family.</text>
</comment>
<proteinExistence type="evidence at protein level"/>
<keyword id="KW-0002">3D-structure</keyword>
<keyword id="KW-0235">DNA replication</keyword>
<keyword id="KW-0238">DNA-binding</keyword>
<keyword id="KW-0426">Late protein</keyword>
<keyword id="KW-1185">Reference proteome</keyword>
<keyword id="KW-0946">Virion</keyword>